<organism>
    <name type="scientific">Porphyra purpurea</name>
    <name type="common">Red seaweed</name>
    <name type="synonym">Ulva purpurea</name>
    <dbReference type="NCBI Taxonomy" id="2787"/>
    <lineage>
        <taxon>Eukaryota</taxon>
        <taxon>Rhodophyta</taxon>
        <taxon>Bangiophyceae</taxon>
        <taxon>Bangiales</taxon>
        <taxon>Bangiaceae</taxon>
        <taxon>Porphyra</taxon>
    </lineage>
</organism>
<evidence type="ECO:0000250" key="1"/>
<evidence type="ECO:0000305" key="2"/>
<protein>
    <recommendedName>
        <fullName evidence="2">Large ribosomal subunit protein uL1c</fullName>
    </recommendedName>
    <alternativeName>
        <fullName>50S ribosomal protein L1, chloroplastic</fullName>
    </alternativeName>
</protein>
<proteinExistence type="inferred from homology"/>
<feature type="chain" id="PRO_0000125791" description="Large ribosomal subunit protein uL1c">
    <location>
        <begin position="1"/>
        <end position="229"/>
    </location>
</feature>
<accession>P51338</accession>
<name>RK1_PORPU</name>
<dbReference type="EMBL" id="U38804">
    <property type="protein sequence ID" value="AAC08224.1"/>
    <property type="molecule type" value="Genomic_DNA"/>
</dbReference>
<dbReference type="PIR" id="S73259">
    <property type="entry name" value="S73259"/>
</dbReference>
<dbReference type="RefSeq" id="NP_053948.1">
    <property type="nucleotide sequence ID" value="NC_000925.1"/>
</dbReference>
<dbReference type="SMR" id="P51338"/>
<dbReference type="GeneID" id="809974"/>
<dbReference type="GO" id="GO:0009507">
    <property type="term" value="C:chloroplast"/>
    <property type="evidence" value="ECO:0007669"/>
    <property type="project" value="UniProtKB-SubCell"/>
</dbReference>
<dbReference type="GO" id="GO:0015934">
    <property type="term" value="C:large ribosomal subunit"/>
    <property type="evidence" value="ECO:0007669"/>
    <property type="project" value="InterPro"/>
</dbReference>
<dbReference type="GO" id="GO:0019843">
    <property type="term" value="F:rRNA binding"/>
    <property type="evidence" value="ECO:0007669"/>
    <property type="project" value="UniProtKB-UniRule"/>
</dbReference>
<dbReference type="GO" id="GO:0003735">
    <property type="term" value="F:structural constituent of ribosome"/>
    <property type="evidence" value="ECO:0007669"/>
    <property type="project" value="InterPro"/>
</dbReference>
<dbReference type="GO" id="GO:0006412">
    <property type="term" value="P:translation"/>
    <property type="evidence" value="ECO:0007669"/>
    <property type="project" value="UniProtKB-UniRule"/>
</dbReference>
<dbReference type="CDD" id="cd00403">
    <property type="entry name" value="Ribosomal_L1"/>
    <property type="match status" value="1"/>
</dbReference>
<dbReference type="FunFam" id="3.40.50.790:FF:000001">
    <property type="entry name" value="50S ribosomal protein L1"/>
    <property type="match status" value="1"/>
</dbReference>
<dbReference type="Gene3D" id="3.30.190.20">
    <property type="match status" value="1"/>
</dbReference>
<dbReference type="Gene3D" id="3.40.50.790">
    <property type="match status" value="1"/>
</dbReference>
<dbReference type="HAMAP" id="MF_01318_B">
    <property type="entry name" value="Ribosomal_uL1_B"/>
    <property type="match status" value="1"/>
</dbReference>
<dbReference type="InterPro" id="IPR005878">
    <property type="entry name" value="Ribosom_uL1_bac-type"/>
</dbReference>
<dbReference type="InterPro" id="IPR002143">
    <property type="entry name" value="Ribosomal_uL1"/>
</dbReference>
<dbReference type="InterPro" id="IPR023674">
    <property type="entry name" value="Ribosomal_uL1-like"/>
</dbReference>
<dbReference type="InterPro" id="IPR028364">
    <property type="entry name" value="Ribosomal_uL1/biogenesis"/>
</dbReference>
<dbReference type="InterPro" id="IPR016095">
    <property type="entry name" value="Ribosomal_uL1_3-a/b-sand"/>
</dbReference>
<dbReference type="InterPro" id="IPR023673">
    <property type="entry name" value="Ribosomal_uL1_CS"/>
</dbReference>
<dbReference type="NCBIfam" id="TIGR01169">
    <property type="entry name" value="rplA_bact"/>
    <property type="match status" value="1"/>
</dbReference>
<dbReference type="PANTHER" id="PTHR36427">
    <property type="entry name" value="54S RIBOSOMAL PROTEIN L1, MITOCHONDRIAL"/>
    <property type="match status" value="1"/>
</dbReference>
<dbReference type="PANTHER" id="PTHR36427:SF3">
    <property type="entry name" value="LARGE RIBOSOMAL SUBUNIT PROTEIN UL1M"/>
    <property type="match status" value="1"/>
</dbReference>
<dbReference type="Pfam" id="PF00687">
    <property type="entry name" value="Ribosomal_L1"/>
    <property type="match status" value="1"/>
</dbReference>
<dbReference type="PIRSF" id="PIRSF002155">
    <property type="entry name" value="Ribosomal_L1"/>
    <property type="match status" value="1"/>
</dbReference>
<dbReference type="SUPFAM" id="SSF56808">
    <property type="entry name" value="Ribosomal protein L1"/>
    <property type="match status" value="1"/>
</dbReference>
<dbReference type="PROSITE" id="PS01199">
    <property type="entry name" value="RIBOSOMAL_L1"/>
    <property type="match status" value="1"/>
</dbReference>
<gene>
    <name type="primary">rpl1</name>
</gene>
<sequence length="229" mass="24987">MKKTSRRLKTLKSKVDPKLYSLNEAVTILRATSNAKFKETAEAHISLGLNPKYADQQLRATVILPKGTGKLVKVAVIAKGEKLTEAMNAGADISGSEELIDEISKGRLDFDKLIATPDIMPLIAKLGRVLGPRGLMPSPKAGTVTLDITKSINEFKGGKVEYRVDRTGIIHVPFGKSSFPEEDLVMNLQTIKDSIDKNKPSGSKGKYWKTFFLSSTMGPSIQIDITSLL</sequence>
<keyword id="KW-0150">Chloroplast</keyword>
<keyword id="KW-0934">Plastid</keyword>
<keyword id="KW-0687">Ribonucleoprotein</keyword>
<keyword id="KW-0689">Ribosomal protein</keyword>
<keyword id="KW-0694">RNA-binding</keyword>
<keyword id="KW-0699">rRNA-binding</keyword>
<comment type="function">
    <text evidence="2">Binds directly to 23S rRNA. Might be involved in E site tRNA release (Potential).</text>
</comment>
<comment type="subunit">
    <text evidence="1">Part of the 50S ribosomal subunit.</text>
</comment>
<comment type="subcellular location">
    <subcellularLocation>
        <location>Plastid</location>
        <location>Chloroplast</location>
    </subcellularLocation>
</comment>
<comment type="similarity">
    <text evidence="2">Belongs to the universal ribosomal protein uL1 family.</text>
</comment>
<geneLocation type="chloroplast"/>
<reference key="1">
    <citation type="journal article" date="1995" name="Plant Mol. Biol. Rep.">
        <title>Complete nucleotide sequence of the Porphyra purpurea chloroplast genome.</title>
        <authorList>
            <person name="Reith M.E."/>
            <person name="Munholland J."/>
        </authorList>
    </citation>
    <scope>NUCLEOTIDE SEQUENCE [LARGE SCALE GENOMIC DNA]</scope>
    <source>
        <strain>Avonport</strain>
    </source>
</reference>